<sequence length="164" mass="18182">MSQSICSTGLRWLWLVVVVLIIDLGSKYLILQNFALGDTVPLFPSLNLHYARNYGAAFSFLADSGGWQRWFFAGIAIGISVILAVMMYRLKATQKLNNIAYALIIGGALGNLFDRLWHGFVVDMIDFYVGDWHFATFNLADTAICVGAALIVLEGFLPSRAKKQ</sequence>
<feature type="chain" id="PRO_0000289423" description="Lipoprotein signal peptidase">
    <location>
        <begin position="1"/>
        <end position="164"/>
    </location>
</feature>
<feature type="transmembrane region" description="Helical" evidence="1">
    <location>
        <begin position="12"/>
        <end position="32"/>
    </location>
</feature>
<feature type="transmembrane region" description="Helical" evidence="1">
    <location>
        <begin position="70"/>
        <end position="90"/>
    </location>
</feature>
<feature type="transmembrane region" description="Helical" evidence="1">
    <location>
        <begin position="102"/>
        <end position="122"/>
    </location>
</feature>
<feature type="transmembrane region" description="Helical" evidence="1">
    <location>
        <begin position="137"/>
        <end position="157"/>
    </location>
</feature>
<feature type="active site" evidence="1">
    <location>
        <position position="123"/>
    </location>
</feature>
<feature type="active site" evidence="1">
    <location>
        <position position="141"/>
    </location>
</feature>
<proteinExistence type="inferred from homology"/>
<dbReference type="EC" id="3.4.23.36" evidence="1"/>
<dbReference type="EMBL" id="CP000036">
    <property type="protein sequence ID" value="ABB64762.1"/>
    <property type="molecule type" value="Genomic_DNA"/>
</dbReference>
<dbReference type="RefSeq" id="WP_000083368.1">
    <property type="nucleotide sequence ID" value="NC_007613.1"/>
</dbReference>
<dbReference type="SMR" id="Q326J6"/>
<dbReference type="MEROPS" id="A08.001"/>
<dbReference type="KEGG" id="sbo:SBO_0026"/>
<dbReference type="HOGENOM" id="CLU_083252_4_0_6"/>
<dbReference type="UniPathway" id="UPA00665"/>
<dbReference type="Proteomes" id="UP000007067">
    <property type="component" value="Chromosome"/>
</dbReference>
<dbReference type="GO" id="GO:0005886">
    <property type="term" value="C:plasma membrane"/>
    <property type="evidence" value="ECO:0007669"/>
    <property type="project" value="UniProtKB-SubCell"/>
</dbReference>
<dbReference type="GO" id="GO:0004190">
    <property type="term" value="F:aspartic-type endopeptidase activity"/>
    <property type="evidence" value="ECO:0007669"/>
    <property type="project" value="UniProtKB-UniRule"/>
</dbReference>
<dbReference type="GO" id="GO:0006508">
    <property type="term" value="P:proteolysis"/>
    <property type="evidence" value="ECO:0007669"/>
    <property type="project" value="UniProtKB-KW"/>
</dbReference>
<dbReference type="HAMAP" id="MF_00161">
    <property type="entry name" value="LspA"/>
    <property type="match status" value="1"/>
</dbReference>
<dbReference type="InterPro" id="IPR001872">
    <property type="entry name" value="Peptidase_A8"/>
</dbReference>
<dbReference type="NCBIfam" id="TIGR00077">
    <property type="entry name" value="lspA"/>
    <property type="match status" value="1"/>
</dbReference>
<dbReference type="PANTHER" id="PTHR33695">
    <property type="entry name" value="LIPOPROTEIN SIGNAL PEPTIDASE"/>
    <property type="match status" value="1"/>
</dbReference>
<dbReference type="PANTHER" id="PTHR33695:SF1">
    <property type="entry name" value="LIPOPROTEIN SIGNAL PEPTIDASE"/>
    <property type="match status" value="1"/>
</dbReference>
<dbReference type="Pfam" id="PF01252">
    <property type="entry name" value="Peptidase_A8"/>
    <property type="match status" value="1"/>
</dbReference>
<dbReference type="PRINTS" id="PR00781">
    <property type="entry name" value="LIPOSIGPTASE"/>
</dbReference>
<dbReference type="PROSITE" id="PS00855">
    <property type="entry name" value="SPASE_II"/>
    <property type="match status" value="1"/>
</dbReference>
<protein>
    <recommendedName>
        <fullName evidence="1">Lipoprotein signal peptidase</fullName>
        <ecNumber evidence="1">3.4.23.36</ecNumber>
    </recommendedName>
    <alternativeName>
        <fullName evidence="1">Prolipoprotein signal peptidase</fullName>
    </alternativeName>
    <alternativeName>
        <fullName evidence="1">Signal peptidase II</fullName>
        <shortName evidence="1">SPase II</shortName>
    </alternativeName>
</protein>
<comment type="function">
    <text evidence="1">This protein specifically catalyzes the removal of signal peptides from prolipoproteins.</text>
</comment>
<comment type="catalytic activity">
    <reaction evidence="1">
        <text>Release of signal peptides from bacterial membrane prolipoproteins. Hydrolyzes -Xaa-Yaa-Zaa-|-(S,diacylglyceryl)Cys-, in which Xaa is hydrophobic (preferably Leu), and Yaa (Ala or Ser) and Zaa (Gly or Ala) have small, neutral side chains.</text>
        <dbReference type="EC" id="3.4.23.36"/>
    </reaction>
</comment>
<comment type="pathway">
    <text evidence="1">Protein modification; lipoprotein biosynthesis (signal peptide cleavage).</text>
</comment>
<comment type="subcellular location">
    <subcellularLocation>
        <location evidence="1">Cell inner membrane</location>
        <topology evidence="1">Multi-pass membrane protein</topology>
    </subcellularLocation>
</comment>
<comment type="similarity">
    <text evidence="1">Belongs to the peptidase A8 family.</text>
</comment>
<keyword id="KW-0064">Aspartyl protease</keyword>
<keyword id="KW-0997">Cell inner membrane</keyword>
<keyword id="KW-1003">Cell membrane</keyword>
<keyword id="KW-0378">Hydrolase</keyword>
<keyword id="KW-0472">Membrane</keyword>
<keyword id="KW-0645">Protease</keyword>
<keyword id="KW-0812">Transmembrane</keyword>
<keyword id="KW-1133">Transmembrane helix</keyword>
<gene>
    <name evidence="1" type="primary">lspA</name>
    <name type="ordered locus">SBO_0026</name>
</gene>
<reference key="1">
    <citation type="journal article" date="2005" name="Nucleic Acids Res.">
        <title>Genome dynamics and diversity of Shigella species, the etiologic agents of bacillary dysentery.</title>
        <authorList>
            <person name="Yang F."/>
            <person name="Yang J."/>
            <person name="Zhang X."/>
            <person name="Chen L."/>
            <person name="Jiang Y."/>
            <person name="Yan Y."/>
            <person name="Tang X."/>
            <person name="Wang J."/>
            <person name="Xiong Z."/>
            <person name="Dong J."/>
            <person name="Xue Y."/>
            <person name="Zhu Y."/>
            <person name="Xu X."/>
            <person name="Sun L."/>
            <person name="Chen S."/>
            <person name="Nie H."/>
            <person name="Peng J."/>
            <person name="Xu J."/>
            <person name="Wang Y."/>
            <person name="Yuan Z."/>
            <person name="Wen Y."/>
            <person name="Yao Z."/>
            <person name="Shen Y."/>
            <person name="Qiang B."/>
            <person name="Hou Y."/>
            <person name="Yu J."/>
            <person name="Jin Q."/>
        </authorList>
    </citation>
    <scope>NUCLEOTIDE SEQUENCE [LARGE SCALE GENOMIC DNA]</scope>
    <source>
        <strain>Sb227</strain>
    </source>
</reference>
<organism>
    <name type="scientific">Shigella boydii serotype 4 (strain Sb227)</name>
    <dbReference type="NCBI Taxonomy" id="300268"/>
    <lineage>
        <taxon>Bacteria</taxon>
        <taxon>Pseudomonadati</taxon>
        <taxon>Pseudomonadota</taxon>
        <taxon>Gammaproteobacteria</taxon>
        <taxon>Enterobacterales</taxon>
        <taxon>Enterobacteriaceae</taxon>
        <taxon>Shigella</taxon>
    </lineage>
</organism>
<accession>Q326J6</accession>
<evidence type="ECO:0000255" key="1">
    <source>
        <dbReference type="HAMAP-Rule" id="MF_00161"/>
    </source>
</evidence>
<name>LSPA_SHIBS</name>